<organism>
    <name type="scientific">Dechloromonas aromatica (strain RCB)</name>
    <dbReference type="NCBI Taxonomy" id="159087"/>
    <lineage>
        <taxon>Bacteria</taxon>
        <taxon>Pseudomonadati</taxon>
        <taxon>Pseudomonadota</taxon>
        <taxon>Betaproteobacteria</taxon>
        <taxon>Rhodocyclales</taxon>
        <taxon>Azonexaceae</taxon>
        <taxon>Dechloromonas</taxon>
    </lineage>
</organism>
<name>IF2_DECAR</name>
<gene>
    <name evidence="2" type="primary">infB</name>
    <name type="ordered locus">Daro_2452</name>
</gene>
<proteinExistence type="inferred from homology"/>
<dbReference type="EMBL" id="CP000089">
    <property type="protein sequence ID" value="AAZ47187.1"/>
    <property type="molecule type" value="Genomic_DNA"/>
</dbReference>
<dbReference type="SMR" id="Q47D94"/>
<dbReference type="STRING" id="159087.Daro_2452"/>
<dbReference type="KEGG" id="dar:Daro_2452"/>
<dbReference type="eggNOG" id="COG0532">
    <property type="taxonomic scope" value="Bacteria"/>
</dbReference>
<dbReference type="HOGENOM" id="CLU_006301_6_0_4"/>
<dbReference type="OrthoDB" id="9811804at2"/>
<dbReference type="GO" id="GO:0005829">
    <property type="term" value="C:cytosol"/>
    <property type="evidence" value="ECO:0007669"/>
    <property type="project" value="TreeGrafter"/>
</dbReference>
<dbReference type="GO" id="GO:0005525">
    <property type="term" value="F:GTP binding"/>
    <property type="evidence" value="ECO:0007669"/>
    <property type="project" value="UniProtKB-KW"/>
</dbReference>
<dbReference type="GO" id="GO:0003924">
    <property type="term" value="F:GTPase activity"/>
    <property type="evidence" value="ECO:0007669"/>
    <property type="project" value="UniProtKB-UniRule"/>
</dbReference>
<dbReference type="GO" id="GO:0097216">
    <property type="term" value="F:guanosine tetraphosphate binding"/>
    <property type="evidence" value="ECO:0007669"/>
    <property type="project" value="UniProtKB-ARBA"/>
</dbReference>
<dbReference type="GO" id="GO:0003743">
    <property type="term" value="F:translation initiation factor activity"/>
    <property type="evidence" value="ECO:0007669"/>
    <property type="project" value="UniProtKB-UniRule"/>
</dbReference>
<dbReference type="CDD" id="cd01887">
    <property type="entry name" value="IF2_eIF5B"/>
    <property type="match status" value="1"/>
</dbReference>
<dbReference type="CDD" id="cd03702">
    <property type="entry name" value="IF2_mtIF2_II"/>
    <property type="match status" value="1"/>
</dbReference>
<dbReference type="CDD" id="cd03692">
    <property type="entry name" value="mtIF2_IVc"/>
    <property type="match status" value="1"/>
</dbReference>
<dbReference type="FunFam" id="2.40.30.10:FF:000007">
    <property type="entry name" value="Translation initiation factor IF-2"/>
    <property type="match status" value="1"/>
</dbReference>
<dbReference type="FunFam" id="2.40.30.10:FF:000008">
    <property type="entry name" value="Translation initiation factor IF-2"/>
    <property type="match status" value="1"/>
</dbReference>
<dbReference type="FunFam" id="3.40.50.10050:FF:000001">
    <property type="entry name" value="Translation initiation factor IF-2"/>
    <property type="match status" value="1"/>
</dbReference>
<dbReference type="FunFam" id="3.40.50.300:FF:000019">
    <property type="entry name" value="Translation initiation factor IF-2"/>
    <property type="match status" value="1"/>
</dbReference>
<dbReference type="Gene3D" id="3.40.50.300">
    <property type="entry name" value="P-loop containing nucleotide triphosphate hydrolases"/>
    <property type="match status" value="1"/>
</dbReference>
<dbReference type="Gene3D" id="3.30.56.50">
    <property type="entry name" value="Putative DNA-binding domain, N-terminal subdomain of bacterial translation initiation factor IF2"/>
    <property type="match status" value="1"/>
</dbReference>
<dbReference type="Gene3D" id="2.40.30.10">
    <property type="entry name" value="Translation factors"/>
    <property type="match status" value="2"/>
</dbReference>
<dbReference type="Gene3D" id="3.40.50.10050">
    <property type="entry name" value="Translation initiation factor IF- 2, domain 3"/>
    <property type="match status" value="1"/>
</dbReference>
<dbReference type="HAMAP" id="MF_00100_B">
    <property type="entry name" value="IF_2_B"/>
    <property type="match status" value="1"/>
</dbReference>
<dbReference type="InterPro" id="IPR009061">
    <property type="entry name" value="DNA-bd_dom_put_sf"/>
</dbReference>
<dbReference type="InterPro" id="IPR053905">
    <property type="entry name" value="EF-G-like_DII"/>
</dbReference>
<dbReference type="InterPro" id="IPR004161">
    <property type="entry name" value="EFTu-like_2"/>
</dbReference>
<dbReference type="InterPro" id="IPR013575">
    <property type="entry name" value="IF2_assoc_dom_bac"/>
</dbReference>
<dbReference type="InterPro" id="IPR044145">
    <property type="entry name" value="IF2_II"/>
</dbReference>
<dbReference type="InterPro" id="IPR006847">
    <property type="entry name" value="IF2_N"/>
</dbReference>
<dbReference type="InterPro" id="IPR027417">
    <property type="entry name" value="P-loop_NTPase"/>
</dbReference>
<dbReference type="InterPro" id="IPR005225">
    <property type="entry name" value="Small_GTP-bd"/>
</dbReference>
<dbReference type="InterPro" id="IPR000795">
    <property type="entry name" value="T_Tr_GTP-bd_dom"/>
</dbReference>
<dbReference type="InterPro" id="IPR000178">
    <property type="entry name" value="TF_IF2_bacterial-like"/>
</dbReference>
<dbReference type="InterPro" id="IPR015760">
    <property type="entry name" value="TIF_IF2"/>
</dbReference>
<dbReference type="InterPro" id="IPR023115">
    <property type="entry name" value="TIF_IF2_dom3"/>
</dbReference>
<dbReference type="InterPro" id="IPR036925">
    <property type="entry name" value="TIF_IF2_dom3_sf"/>
</dbReference>
<dbReference type="InterPro" id="IPR009000">
    <property type="entry name" value="Transl_B-barrel_sf"/>
</dbReference>
<dbReference type="NCBIfam" id="TIGR00487">
    <property type="entry name" value="IF-2"/>
    <property type="match status" value="1"/>
</dbReference>
<dbReference type="NCBIfam" id="TIGR00231">
    <property type="entry name" value="small_GTP"/>
    <property type="match status" value="1"/>
</dbReference>
<dbReference type="PANTHER" id="PTHR43381:SF5">
    <property type="entry name" value="TR-TYPE G DOMAIN-CONTAINING PROTEIN"/>
    <property type="match status" value="1"/>
</dbReference>
<dbReference type="PANTHER" id="PTHR43381">
    <property type="entry name" value="TRANSLATION INITIATION FACTOR IF-2-RELATED"/>
    <property type="match status" value="1"/>
</dbReference>
<dbReference type="Pfam" id="PF22042">
    <property type="entry name" value="EF-G_D2"/>
    <property type="match status" value="1"/>
</dbReference>
<dbReference type="Pfam" id="PF00009">
    <property type="entry name" value="GTP_EFTU"/>
    <property type="match status" value="1"/>
</dbReference>
<dbReference type="Pfam" id="PF03144">
    <property type="entry name" value="GTP_EFTU_D2"/>
    <property type="match status" value="1"/>
</dbReference>
<dbReference type="Pfam" id="PF11987">
    <property type="entry name" value="IF-2"/>
    <property type="match status" value="1"/>
</dbReference>
<dbReference type="Pfam" id="PF08364">
    <property type="entry name" value="IF2_assoc"/>
    <property type="match status" value="1"/>
</dbReference>
<dbReference type="Pfam" id="PF04760">
    <property type="entry name" value="IF2_N"/>
    <property type="match status" value="2"/>
</dbReference>
<dbReference type="SUPFAM" id="SSF52156">
    <property type="entry name" value="Initiation factor IF2/eIF5b, domain 3"/>
    <property type="match status" value="1"/>
</dbReference>
<dbReference type="SUPFAM" id="SSF52540">
    <property type="entry name" value="P-loop containing nucleoside triphosphate hydrolases"/>
    <property type="match status" value="1"/>
</dbReference>
<dbReference type="SUPFAM" id="SSF46955">
    <property type="entry name" value="Putative DNA-binding domain"/>
    <property type="match status" value="1"/>
</dbReference>
<dbReference type="SUPFAM" id="SSF50447">
    <property type="entry name" value="Translation proteins"/>
    <property type="match status" value="2"/>
</dbReference>
<dbReference type="PROSITE" id="PS51722">
    <property type="entry name" value="G_TR_2"/>
    <property type="match status" value="1"/>
</dbReference>
<dbReference type="PROSITE" id="PS01176">
    <property type="entry name" value="IF2"/>
    <property type="match status" value="1"/>
</dbReference>
<sequence length="904" mass="98103">MSATTVSQFAVELKMPVVALLEQLGKAGVGKSDANDMLNDQDKTRLLDYLRRAHGDESQTKITLTRKQTSEIKATDSHGRARTVQVEVRKKRVLVKRDIGEHAPEVELEASNALQEEVSAPEVIPEPVVEVVPEPVIEVVPEPVVEIVPEPVVEAPVEVPVEEVVLEKAAPVAPTRASIIGEKELQARAEESRRYNQLREIQERELREKQAREAQLVQMRQQAELAAAAAKAAELAKNQAATQAKTSEGAEKGTLHKKPETPGKKGDKGGRAADDGKKKGGIKTRGSDGAGGWKDNRHGHKKSHKVDDGQGSFQAPTEPVVREVHIPETISVSDLAHKMAIKATEIIKVMMKMGSMVTINQVLDQETAMIVVEEMGHQALAAKLDDPDAFLEEHAEHKDVPLEHRAPVVTVMGHVDHGKTSLLDYIRRAKVASGEAGGITQHIGAYHVETDRGMVTFLDTPGHEAFTAMRARGAKATDIVILVVAADDGVMPQTKEAIHHAKAAGVPLVVAVNKIDKPDANPERVKQELVAEGVIPEEYGGDSPFVPVSAKKGTGIDELLEQVLLQAEILELTAQKDAPAKGLIIEARLDKGRGAVATMLVQSGTLKRGDIVLAGQVFGRVRAMLDENGKPINEAGPSIPVEILGLSDVPAAGEEAIVLGDEKKAREIALFRQGKFRDVKLAKQQAAKLENMFQQMEEGEVKTLPLIVKADVQGSQEALVQTLSKLSNEEVRVQIIHGAVGAISESDVNLAQASGAVIIGFNIRADAGSRKLAESFGVDIRYYNVIYDAVDEVKAALSGMLSPEKREQITGMVEIRQVFLVSKVGAIAGCYVLEGFVKRNSRVRLLRNNVVQWDGELDSLKRFKDDVKEVRSNFECGLSLRGNNDIQVGDQLEVYEIQEVARSL</sequence>
<feature type="chain" id="PRO_0000228188" description="Translation initiation factor IF-2">
    <location>
        <begin position="1"/>
        <end position="904"/>
    </location>
</feature>
<feature type="domain" description="tr-type G">
    <location>
        <begin position="404"/>
        <end position="571"/>
    </location>
</feature>
<feature type="region of interest" description="Disordered" evidence="3">
    <location>
        <begin position="239"/>
        <end position="316"/>
    </location>
</feature>
<feature type="region of interest" description="G1" evidence="1">
    <location>
        <begin position="413"/>
        <end position="420"/>
    </location>
</feature>
<feature type="region of interest" description="G2" evidence="1">
    <location>
        <begin position="438"/>
        <end position="442"/>
    </location>
</feature>
<feature type="region of interest" description="G3" evidence="1">
    <location>
        <begin position="459"/>
        <end position="462"/>
    </location>
</feature>
<feature type="region of interest" description="G4" evidence="1">
    <location>
        <begin position="513"/>
        <end position="516"/>
    </location>
</feature>
<feature type="region of interest" description="G5" evidence="1">
    <location>
        <begin position="549"/>
        <end position="551"/>
    </location>
</feature>
<feature type="compositionally biased region" description="Basic and acidic residues" evidence="3">
    <location>
        <begin position="248"/>
        <end position="278"/>
    </location>
</feature>
<feature type="binding site" evidence="2">
    <location>
        <begin position="413"/>
        <end position="420"/>
    </location>
    <ligand>
        <name>GTP</name>
        <dbReference type="ChEBI" id="CHEBI:37565"/>
    </ligand>
</feature>
<feature type="binding site" evidence="2">
    <location>
        <begin position="459"/>
        <end position="463"/>
    </location>
    <ligand>
        <name>GTP</name>
        <dbReference type="ChEBI" id="CHEBI:37565"/>
    </ligand>
</feature>
<feature type="binding site" evidence="2">
    <location>
        <begin position="513"/>
        <end position="516"/>
    </location>
    <ligand>
        <name>GTP</name>
        <dbReference type="ChEBI" id="CHEBI:37565"/>
    </ligand>
</feature>
<reference key="1">
    <citation type="journal article" date="2009" name="BMC Genomics">
        <title>Metabolic analysis of the soil microbe Dechloromonas aromatica str. RCB: indications of a surprisingly complex life-style and cryptic anaerobic pathways for aromatic degradation.</title>
        <authorList>
            <person name="Salinero K.K."/>
            <person name="Keller K."/>
            <person name="Feil W.S."/>
            <person name="Feil H."/>
            <person name="Trong S."/>
            <person name="Di Bartolo G."/>
            <person name="Lapidus A."/>
        </authorList>
    </citation>
    <scope>NUCLEOTIDE SEQUENCE [LARGE SCALE GENOMIC DNA]</scope>
    <source>
        <strain>RCB</strain>
    </source>
</reference>
<protein>
    <recommendedName>
        <fullName evidence="2">Translation initiation factor IF-2</fullName>
    </recommendedName>
</protein>
<accession>Q47D94</accession>
<evidence type="ECO:0000250" key="1"/>
<evidence type="ECO:0000255" key="2">
    <source>
        <dbReference type="HAMAP-Rule" id="MF_00100"/>
    </source>
</evidence>
<evidence type="ECO:0000256" key="3">
    <source>
        <dbReference type="SAM" id="MobiDB-lite"/>
    </source>
</evidence>
<keyword id="KW-0963">Cytoplasm</keyword>
<keyword id="KW-0342">GTP-binding</keyword>
<keyword id="KW-0396">Initiation factor</keyword>
<keyword id="KW-0547">Nucleotide-binding</keyword>
<keyword id="KW-0648">Protein biosynthesis</keyword>
<comment type="function">
    <text evidence="2">One of the essential components for the initiation of protein synthesis. Protects formylmethionyl-tRNA from spontaneous hydrolysis and promotes its binding to the 30S ribosomal subunits. Also involved in the hydrolysis of GTP during the formation of the 70S ribosomal complex.</text>
</comment>
<comment type="subcellular location">
    <subcellularLocation>
        <location evidence="2">Cytoplasm</location>
    </subcellularLocation>
</comment>
<comment type="similarity">
    <text evidence="2">Belongs to the TRAFAC class translation factor GTPase superfamily. Classic translation factor GTPase family. IF-2 subfamily.</text>
</comment>